<organism>
    <name type="scientific">Oenococcus oeni (strain ATCC BAA-331 / PSU-1)</name>
    <dbReference type="NCBI Taxonomy" id="203123"/>
    <lineage>
        <taxon>Bacteria</taxon>
        <taxon>Bacillati</taxon>
        <taxon>Bacillota</taxon>
        <taxon>Bacilli</taxon>
        <taxon>Lactobacillales</taxon>
        <taxon>Lactobacillaceae</taxon>
        <taxon>Oenococcus</taxon>
    </lineage>
</organism>
<protein>
    <recommendedName>
        <fullName evidence="1">Acetyl-coenzyme A carboxylase carboxyl transferase subunit beta</fullName>
        <shortName evidence="1">ACCase subunit beta</shortName>
        <shortName evidence="1">Acetyl-CoA carboxylase carboxyltransferase subunit beta</shortName>
        <ecNumber evidence="1">2.1.3.15</ecNumber>
    </recommendedName>
</protein>
<dbReference type="EC" id="2.1.3.15" evidence="1"/>
<dbReference type="EMBL" id="CP000411">
    <property type="protein sequence ID" value="ABJ57436.1"/>
    <property type="molecule type" value="Genomic_DNA"/>
</dbReference>
<dbReference type="RefSeq" id="WP_011677770.1">
    <property type="nucleotide sequence ID" value="NC_008528.1"/>
</dbReference>
<dbReference type="SMR" id="Q04DN6"/>
<dbReference type="STRING" id="203123.OEOE_1584"/>
<dbReference type="KEGG" id="ooe:OEOE_1584"/>
<dbReference type="PATRIC" id="fig|203123.7.peg.1614"/>
<dbReference type="eggNOG" id="COG0777">
    <property type="taxonomic scope" value="Bacteria"/>
</dbReference>
<dbReference type="HOGENOM" id="CLU_015486_1_1_9"/>
<dbReference type="UniPathway" id="UPA00655">
    <property type="reaction ID" value="UER00711"/>
</dbReference>
<dbReference type="Proteomes" id="UP000000774">
    <property type="component" value="Chromosome"/>
</dbReference>
<dbReference type="GO" id="GO:0009317">
    <property type="term" value="C:acetyl-CoA carboxylase complex"/>
    <property type="evidence" value="ECO:0007669"/>
    <property type="project" value="InterPro"/>
</dbReference>
<dbReference type="GO" id="GO:0003989">
    <property type="term" value="F:acetyl-CoA carboxylase activity"/>
    <property type="evidence" value="ECO:0007669"/>
    <property type="project" value="InterPro"/>
</dbReference>
<dbReference type="GO" id="GO:0005524">
    <property type="term" value="F:ATP binding"/>
    <property type="evidence" value="ECO:0007669"/>
    <property type="project" value="UniProtKB-KW"/>
</dbReference>
<dbReference type="GO" id="GO:0016743">
    <property type="term" value="F:carboxyl- or carbamoyltransferase activity"/>
    <property type="evidence" value="ECO:0007669"/>
    <property type="project" value="UniProtKB-UniRule"/>
</dbReference>
<dbReference type="GO" id="GO:0008270">
    <property type="term" value="F:zinc ion binding"/>
    <property type="evidence" value="ECO:0007669"/>
    <property type="project" value="UniProtKB-UniRule"/>
</dbReference>
<dbReference type="GO" id="GO:0006633">
    <property type="term" value="P:fatty acid biosynthetic process"/>
    <property type="evidence" value="ECO:0007669"/>
    <property type="project" value="UniProtKB-KW"/>
</dbReference>
<dbReference type="GO" id="GO:2001295">
    <property type="term" value="P:malonyl-CoA biosynthetic process"/>
    <property type="evidence" value="ECO:0007669"/>
    <property type="project" value="UniProtKB-UniRule"/>
</dbReference>
<dbReference type="Gene3D" id="3.90.226.10">
    <property type="entry name" value="2-enoyl-CoA Hydratase, Chain A, domain 1"/>
    <property type="match status" value="1"/>
</dbReference>
<dbReference type="HAMAP" id="MF_01395">
    <property type="entry name" value="AcetylCoA_CT_beta"/>
    <property type="match status" value="1"/>
</dbReference>
<dbReference type="InterPro" id="IPR034733">
    <property type="entry name" value="AcCoA_carboxyl_beta"/>
</dbReference>
<dbReference type="InterPro" id="IPR000438">
    <property type="entry name" value="Acetyl_CoA_COase_Trfase_b_su"/>
</dbReference>
<dbReference type="InterPro" id="IPR029045">
    <property type="entry name" value="ClpP/crotonase-like_dom_sf"/>
</dbReference>
<dbReference type="InterPro" id="IPR011762">
    <property type="entry name" value="COA_CT_N"/>
</dbReference>
<dbReference type="PANTHER" id="PTHR42995">
    <property type="entry name" value="ACETYL-COENZYME A CARBOXYLASE CARBOXYL TRANSFERASE SUBUNIT BETA, CHLOROPLASTIC"/>
    <property type="match status" value="1"/>
</dbReference>
<dbReference type="PANTHER" id="PTHR42995:SF5">
    <property type="entry name" value="ACETYL-COENZYME A CARBOXYLASE CARBOXYL TRANSFERASE SUBUNIT BETA, CHLOROPLASTIC"/>
    <property type="match status" value="1"/>
</dbReference>
<dbReference type="Pfam" id="PF01039">
    <property type="entry name" value="Carboxyl_trans"/>
    <property type="match status" value="1"/>
</dbReference>
<dbReference type="PRINTS" id="PR01070">
    <property type="entry name" value="ACCCTRFRASEB"/>
</dbReference>
<dbReference type="SUPFAM" id="SSF52096">
    <property type="entry name" value="ClpP/crotonase"/>
    <property type="match status" value="1"/>
</dbReference>
<dbReference type="PROSITE" id="PS50980">
    <property type="entry name" value="COA_CT_NTER"/>
    <property type="match status" value="1"/>
</dbReference>
<sequence length="289" mass="32945">MTWFNRLKDYSKQQTDKLLNRYLTQIPSGIWRECPRCHSRFYYRRFGNFDVCPECGYGFRLTARKRLRMLTKDAVEWDADLVTKDPLSFPGYSEKLQRAQKITKLNESVWTGLALLDKRSVALGIMDPYFIMGSLGMITGEKLARLFERATLHELPVILFTASGGARMQEGIHSLMQMSKVTAAVNRHRQAGLLYIVVLTDPTTGGVIASFAMEADITIAEPKALIGFAGRRVIEQTVKQKLPADFQSAEQLQKNGFVDEIVPREHLTEELKLLLDMNQSNAWRANHDK</sequence>
<reference key="1">
    <citation type="journal article" date="2006" name="Proc. Natl. Acad. Sci. U.S.A.">
        <title>Comparative genomics of the lactic acid bacteria.</title>
        <authorList>
            <person name="Makarova K.S."/>
            <person name="Slesarev A."/>
            <person name="Wolf Y.I."/>
            <person name="Sorokin A."/>
            <person name="Mirkin B."/>
            <person name="Koonin E.V."/>
            <person name="Pavlov A."/>
            <person name="Pavlova N."/>
            <person name="Karamychev V."/>
            <person name="Polouchine N."/>
            <person name="Shakhova V."/>
            <person name="Grigoriev I."/>
            <person name="Lou Y."/>
            <person name="Rohksar D."/>
            <person name="Lucas S."/>
            <person name="Huang K."/>
            <person name="Goodstein D.M."/>
            <person name="Hawkins T."/>
            <person name="Plengvidhya V."/>
            <person name="Welker D."/>
            <person name="Hughes J."/>
            <person name="Goh Y."/>
            <person name="Benson A."/>
            <person name="Baldwin K."/>
            <person name="Lee J.-H."/>
            <person name="Diaz-Muniz I."/>
            <person name="Dosti B."/>
            <person name="Smeianov V."/>
            <person name="Wechter W."/>
            <person name="Barabote R."/>
            <person name="Lorca G."/>
            <person name="Altermann E."/>
            <person name="Barrangou R."/>
            <person name="Ganesan B."/>
            <person name="Xie Y."/>
            <person name="Rawsthorne H."/>
            <person name="Tamir D."/>
            <person name="Parker C."/>
            <person name="Breidt F."/>
            <person name="Broadbent J.R."/>
            <person name="Hutkins R."/>
            <person name="O'Sullivan D."/>
            <person name="Steele J."/>
            <person name="Unlu G."/>
            <person name="Saier M.H. Jr."/>
            <person name="Klaenhammer T."/>
            <person name="Richardson P."/>
            <person name="Kozyavkin S."/>
            <person name="Weimer B.C."/>
            <person name="Mills D.A."/>
        </authorList>
    </citation>
    <scope>NUCLEOTIDE SEQUENCE [LARGE SCALE GENOMIC DNA]</scope>
    <source>
        <strain>ATCC BAA-331 / PSU-1</strain>
    </source>
</reference>
<keyword id="KW-0067">ATP-binding</keyword>
<keyword id="KW-0963">Cytoplasm</keyword>
<keyword id="KW-0275">Fatty acid biosynthesis</keyword>
<keyword id="KW-0276">Fatty acid metabolism</keyword>
<keyword id="KW-0444">Lipid biosynthesis</keyword>
<keyword id="KW-0443">Lipid metabolism</keyword>
<keyword id="KW-0479">Metal-binding</keyword>
<keyword id="KW-0547">Nucleotide-binding</keyword>
<keyword id="KW-1185">Reference proteome</keyword>
<keyword id="KW-0808">Transferase</keyword>
<keyword id="KW-0862">Zinc</keyword>
<keyword id="KW-0863">Zinc-finger</keyword>
<evidence type="ECO:0000255" key="1">
    <source>
        <dbReference type="HAMAP-Rule" id="MF_01395"/>
    </source>
</evidence>
<evidence type="ECO:0000255" key="2">
    <source>
        <dbReference type="PROSITE-ProRule" id="PRU01136"/>
    </source>
</evidence>
<proteinExistence type="inferred from homology"/>
<comment type="function">
    <text evidence="1">Component of the acetyl coenzyme A carboxylase (ACC) complex. Biotin carboxylase (BC) catalyzes the carboxylation of biotin on its carrier protein (BCCP) and then the CO(2) group is transferred by the transcarboxylase to acetyl-CoA to form malonyl-CoA.</text>
</comment>
<comment type="catalytic activity">
    <reaction evidence="1">
        <text>N(6)-carboxybiotinyl-L-lysyl-[protein] + acetyl-CoA = N(6)-biotinyl-L-lysyl-[protein] + malonyl-CoA</text>
        <dbReference type="Rhea" id="RHEA:54728"/>
        <dbReference type="Rhea" id="RHEA-COMP:10505"/>
        <dbReference type="Rhea" id="RHEA-COMP:10506"/>
        <dbReference type="ChEBI" id="CHEBI:57288"/>
        <dbReference type="ChEBI" id="CHEBI:57384"/>
        <dbReference type="ChEBI" id="CHEBI:83144"/>
        <dbReference type="ChEBI" id="CHEBI:83145"/>
        <dbReference type="EC" id="2.1.3.15"/>
    </reaction>
</comment>
<comment type="cofactor">
    <cofactor evidence="1">
        <name>Zn(2+)</name>
        <dbReference type="ChEBI" id="CHEBI:29105"/>
    </cofactor>
    <text evidence="1">Binds 1 zinc ion per subunit.</text>
</comment>
<comment type="pathway">
    <text evidence="1">Lipid metabolism; malonyl-CoA biosynthesis; malonyl-CoA from acetyl-CoA: step 1/1.</text>
</comment>
<comment type="subunit">
    <text evidence="1">Acetyl-CoA carboxylase is a heterohexamer composed of biotin carboxyl carrier protein (AccB), biotin carboxylase (AccC) and two subunits each of ACCase subunit alpha (AccA) and ACCase subunit beta (AccD).</text>
</comment>
<comment type="subcellular location">
    <subcellularLocation>
        <location evidence="1">Cytoplasm</location>
    </subcellularLocation>
</comment>
<comment type="similarity">
    <text evidence="1">Belongs to the AccD/PCCB family.</text>
</comment>
<feature type="chain" id="PRO_0000389807" description="Acetyl-coenzyme A carboxylase carboxyl transferase subunit beta">
    <location>
        <begin position="1"/>
        <end position="289"/>
    </location>
</feature>
<feature type="domain" description="CoA carboxyltransferase N-terminal" evidence="2">
    <location>
        <begin position="30"/>
        <end position="289"/>
    </location>
</feature>
<feature type="zinc finger region" description="C4-type" evidence="1">
    <location>
        <begin position="34"/>
        <end position="55"/>
    </location>
</feature>
<feature type="binding site" evidence="1">
    <location>
        <position position="34"/>
    </location>
    <ligand>
        <name>Zn(2+)</name>
        <dbReference type="ChEBI" id="CHEBI:29105"/>
    </ligand>
</feature>
<feature type="binding site" evidence="1">
    <location>
        <position position="37"/>
    </location>
    <ligand>
        <name>Zn(2+)</name>
        <dbReference type="ChEBI" id="CHEBI:29105"/>
    </ligand>
</feature>
<feature type="binding site" evidence="1">
    <location>
        <position position="52"/>
    </location>
    <ligand>
        <name>Zn(2+)</name>
        <dbReference type="ChEBI" id="CHEBI:29105"/>
    </ligand>
</feature>
<feature type="binding site" evidence="1">
    <location>
        <position position="55"/>
    </location>
    <ligand>
        <name>Zn(2+)</name>
        <dbReference type="ChEBI" id="CHEBI:29105"/>
    </ligand>
</feature>
<gene>
    <name evidence="1" type="primary">accD</name>
    <name type="ordered locus">OEOE_1584</name>
</gene>
<name>ACCD_OENOB</name>
<accession>Q04DN6</accession>